<sequence length="157" mass="16880">MKRLFMKASLVLFAVVFVFAVKGAPAKAETHAYDGKSPYYNDCASSGSTKKSSNLVNASNQVIGVVELKFSSTCKTAWAKITMNNTLTSGYEANAEITRNTDGKRYNCDSAGGNGKAVAGQKSCYTPMVYDLDPRTSYAFGKYSGPNLNVWATTGSY</sequence>
<feature type="signal peptide" evidence="1">
    <location>
        <begin position="1"/>
        <end position="28"/>
    </location>
</feature>
<feature type="chain" id="PRO_0000013706" description="Uncharacterized protein YjfA">
    <location>
        <begin position="29"/>
        <end position="157"/>
    </location>
</feature>
<gene>
    <name type="primary">yjfA</name>
    <name type="ordered locus">BSU12110</name>
</gene>
<reference key="1">
    <citation type="submission" date="1997-07" db="EMBL/GenBank/DDBJ databases">
        <title>A 35.7 kb DNA fragment from Bacillus subtilis chromosome containing a putative 12.3 kb operon involved in hexuronate catabolism and a perfect catabolite-responsive element.</title>
        <authorList>
            <person name="Rivolta C."/>
            <person name="Soldo B."/>
            <person name="Lazarevic V."/>
            <person name="Joris B."/>
            <person name="Mauel C."/>
            <person name="Karamata D."/>
        </authorList>
    </citation>
    <scope>NUCLEOTIDE SEQUENCE [GENOMIC DNA]</scope>
    <source>
        <strain>168</strain>
    </source>
</reference>
<reference key="2">
    <citation type="journal article" date="1997" name="Nature">
        <title>The complete genome sequence of the Gram-positive bacterium Bacillus subtilis.</title>
        <authorList>
            <person name="Kunst F."/>
            <person name="Ogasawara N."/>
            <person name="Moszer I."/>
            <person name="Albertini A.M."/>
            <person name="Alloni G."/>
            <person name="Azevedo V."/>
            <person name="Bertero M.G."/>
            <person name="Bessieres P."/>
            <person name="Bolotin A."/>
            <person name="Borchert S."/>
            <person name="Borriss R."/>
            <person name="Boursier L."/>
            <person name="Brans A."/>
            <person name="Braun M."/>
            <person name="Brignell S.C."/>
            <person name="Bron S."/>
            <person name="Brouillet S."/>
            <person name="Bruschi C.V."/>
            <person name="Caldwell B."/>
            <person name="Capuano V."/>
            <person name="Carter N.M."/>
            <person name="Choi S.-K."/>
            <person name="Codani J.-J."/>
            <person name="Connerton I.F."/>
            <person name="Cummings N.J."/>
            <person name="Daniel R.A."/>
            <person name="Denizot F."/>
            <person name="Devine K.M."/>
            <person name="Duesterhoeft A."/>
            <person name="Ehrlich S.D."/>
            <person name="Emmerson P.T."/>
            <person name="Entian K.-D."/>
            <person name="Errington J."/>
            <person name="Fabret C."/>
            <person name="Ferrari E."/>
            <person name="Foulger D."/>
            <person name="Fritz C."/>
            <person name="Fujita M."/>
            <person name="Fujita Y."/>
            <person name="Fuma S."/>
            <person name="Galizzi A."/>
            <person name="Galleron N."/>
            <person name="Ghim S.-Y."/>
            <person name="Glaser P."/>
            <person name="Goffeau A."/>
            <person name="Golightly E.J."/>
            <person name="Grandi G."/>
            <person name="Guiseppi G."/>
            <person name="Guy B.J."/>
            <person name="Haga K."/>
            <person name="Haiech J."/>
            <person name="Harwood C.R."/>
            <person name="Henaut A."/>
            <person name="Hilbert H."/>
            <person name="Holsappel S."/>
            <person name="Hosono S."/>
            <person name="Hullo M.-F."/>
            <person name="Itaya M."/>
            <person name="Jones L.-M."/>
            <person name="Joris B."/>
            <person name="Karamata D."/>
            <person name="Kasahara Y."/>
            <person name="Klaerr-Blanchard M."/>
            <person name="Klein C."/>
            <person name="Kobayashi Y."/>
            <person name="Koetter P."/>
            <person name="Koningstein G."/>
            <person name="Krogh S."/>
            <person name="Kumano M."/>
            <person name="Kurita K."/>
            <person name="Lapidus A."/>
            <person name="Lardinois S."/>
            <person name="Lauber J."/>
            <person name="Lazarevic V."/>
            <person name="Lee S.-M."/>
            <person name="Levine A."/>
            <person name="Liu H."/>
            <person name="Masuda S."/>
            <person name="Mauel C."/>
            <person name="Medigue C."/>
            <person name="Medina N."/>
            <person name="Mellado R.P."/>
            <person name="Mizuno M."/>
            <person name="Moestl D."/>
            <person name="Nakai S."/>
            <person name="Noback M."/>
            <person name="Noone D."/>
            <person name="O'Reilly M."/>
            <person name="Ogawa K."/>
            <person name="Ogiwara A."/>
            <person name="Oudega B."/>
            <person name="Park S.-H."/>
            <person name="Parro V."/>
            <person name="Pohl T.M."/>
            <person name="Portetelle D."/>
            <person name="Porwollik S."/>
            <person name="Prescott A.M."/>
            <person name="Presecan E."/>
            <person name="Pujic P."/>
            <person name="Purnelle B."/>
            <person name="Rapoport G."/>
            <person name="Rey M."/>
            <person name="Reynolds S."/>
            <person name="Rieger M."/>
            <person name="Rivolta C."/>
            <person name="Rocha E."/>
            <person name="Roche B."/>
            <person name="Rose M."/>
            <person name="Sadaie Y."/>
            <person name="Sato T."/>
            <person name="Scanlan E."/>
            <person name="Schleich S."/>
            <person name="Schroeter R."/>
            <person name="Scoffone F."/>
            <person name="Sekiguchi J."/>
            <person name="Sekowska A."/>
            <person name="Seror S.J."/>
            <person name="Serror P."/>
            <person name="Shin B.-S."/>
            <person name="Soldo B."/>
            <person name="Sorokin A."/>
            <person name="Tacconi E."/>
            <person name="Takagi T."/>
            <person name="Takahashi H."/>
            <person name="Takemaru K."/>
            <person name="Takeuchi M."/>
            <person name="Tamakoshi A."/>
            <person name="Tanaka T."/>
            <person name="Terpstra P."/>
            <person name="Tognoni A."/>
            <person name="Tosato V."/>
            <person name="Uchiyama S."/>
            <person name="Vandenbol M."/>
            <person name="Vannier F."/>
            <person name="Vassarotti A."/>
            <person name="Viari A."/>
            <person name="Wambutt R."/>
            <person name="Wedler E."/>
            <person name="Wedler H."/>
            <person name="Weitzenegger T."/>
            <person name="Winters P."/>
            <person name="Wipat A."/>
            <person name="Yamamoto H."/>
            <person name="Yamane K."/>
            <person name="Yasumoto K."/>
            <person name="Yata K."/>
            <person name="Yoshida K."/>
            <person name="Yoshikawa H.-F."/>
            <person name="Zumstein E."/>
            <person name="Yoshikawa H."/>
            <person name="Danchin A."/>
        </authorList>
    </citation>
    <scope>NUCLEOTIDE SEQUENCE [LARGE SCALE GENOMIC DNA]</scope>
    <source>
        <strain>168</strain>
    </source>
</reference>
<evidence type="ECO:0000255" key="1"/>
<organism>
    <name type="scientific">Bacillus subtilis (strain 168)</name>
    <dbReference type="NCBI Taxonomy" id="224308"/>
    <lineage>
        <taxon>Bacteria</taxon>
        <taxon>Bacillati</taxon>
        <taxon>Bacillota</taxon>
        <taxon>Bacilli</taxon>
        <taxon>Bacillales</taxon>
        <taxon>Bacillaceae</taxon>
        <taxon>Bacillus</taxon>
    </lineage>
</organism>
<protein>
    <recommendedName>
        <fullName>Uncharacterized protein YjfA</fullName>
    </recommendedName>
</protein>
<dbReference type="EMBL" id="AF015825">
    <property type="protein sequence ID" value="AAC46307.1"/>
    <property type="molecule type" value="Genomic_DNA"/>
</dbReference>
<dbReference type="EMBL" id="AL009126">
    <property type="protein sequence ID" value="CAB13068.1"/>
    <property type="molecule type" value="Genomic_DNA"/>
</dbReference>
<dbReference type="PIR" id="H69849">
    <property type="entry name" value="H69849"/>
</dbReference>
<dbReference type="RefSeq" id="NP_389093.1">
    <property type="nucleotide sequence ID" value="NC_000964.3"/>
</dbReference>
<dbReference type="RefSeq" id="WP_003244679.1">
    <property type="nucleotide sequence ID" value="NZ_OZ025638.1"/>
</dbReference>
<dbReference type="FunCoup" id="O34554">
    <property type="interactions" value="10"/>
</dbReference>
<dbReference type="PaxDb" id="224308-BSU12110"/>
<dbReference type="DNASU" id="939830"/>
<dbReference type="EnsemblBacteria" id="CAB13068">
    <property type="protein sequence ID" value="CAB13068"/>
    <property type="gene ID" value="BSU_12110"/>
</dbReference>
<dbReference type="GeneID" id="939830"/>
<dbReference type="KEGG" id="bsu:BSU12110"/>
<dbReference type="PATRIC" id="fig|224308.179.peg.1308"/>
<dbReference type="eggNOG" id="ENOG5033I4U">
    <property type="taxonomic scope" value="Bacteria"/>
</dbReference>
<dbReference type="InParanoid" id="O34554"/>
<dbReference type="OrthoDB" id="2906875at2"/>
<dbReference type="BioCyc" id="BSUB:BSU12110-MONOMER"/>
<dbReference type="Proteomes" id="UP000001570">
    <property type="component" value="Chromosome"/>
</dbReference>
<dbReference type="InterPro" id="IPR021224">
    <property type="entry name" value="DUF2690"/>
</dbReference>
<dbReference type="Pfam" id="PF10901">
    <property type="entry name" value="DUF2690"/>
    <property type="match status" value="1"/>
</dbReference>
<proteinExistence type="inferred from homology"/>
<accession>O34554</accession>
<keyword id="KW-1185">Reference proteome</keyword>
<keyword id="KW-0732">Signal</keyword>
<name>YJFA_BACSU</name>